<proteinExistence type="inferred from homology"/>
<keyword id="KW-1003">Cell membrane</keyword>
<keyword id="KW-0449">Lipoprotein</keyword>
<keyword id="KW-0472">Membrane</keyword>
<keyword id="KW-0564">Palmitate</keyword>
<keyword id="KW-1185">Reference proteome</keyword>
<keyword id="KW-0732">Signal</keyword>
<comment type="subcellular location">
    <subcellularLocation>
        <location evidence="1">Cell membrane</location>
        <topology evidence="1">Lipid-anchor</topology>
    </subcellularLocation>
</comment>
<protein>
    <recommendedName>
        <fullName>Uncharacterized lipoprotein YeaY</fullName>
    </recommendedName>
</protein>
<feature type="signal peptide" evidence="1">
    <location>
        <begin position="1"/>
        <end position="22"/>
    </location>
</feature>
<feature type="chain" id="PRO_0000013771" description="Uncharacterized lipoprotein YeaY">
    <location>
        <begin position="23"/>
        <end position="193"/>
    </location>
</feature>
<feature type="lipid moiety-binding region" description="N-palmitoyl cysteine" evidence="1">
    <location>
        <position position="23"/>
    </location>
</feature>
<feature type="lipid moiety-binding region" description="S-diacylglycerol cysteine" evidence="1">
    <location>
        <position position="23"/>
    </location>
</feature>
<feature type="sequence conflict" description="In Ref. 4." evidence="2" ref="4">
    <original>A</original>
    <variation>P</variation>
    <location>
        <position position="124"/>
    </location>
</feature>
<gene>
    <name type="primary">yeaY</name>
    <name type="ordered locus">b1806</name>
    <name type="ordered locus">JW1795</name>
</gene>
<reference key="1">
    <citation type="journal article" date="1996" name="DNA Res.">
        <title>A 460-kb DNA sequence of the Escherichia coli K-12 genome corresponding to the 40.1-50.0 min region on the linkage map.</title>
        <authorList>
            <person name="Itoh T."/>
            <person name="Aiba H."/>
            <person name="Baba T."/>
            <person name="Fujita K."/>
            <person name="Hayashi K."/>
            <person name="Inada T."/>
            <person name="Isono K."/>
            <person name="Kasai H."/>
            <person name="Kimura S."/>
            <person name="Kitakawa M."/>
            <person name="Kitagawa M."/>
            <person name="Makino K."/>
            <person name="Miki T."/>
            <person name="Mizobuchi K."/>
            <person name="Mori H."/>
            <person name="Mori T."/>
            <person name="Motomura K."/>
            <person name="Nakade S."/>
            <person name="Nakamura Y."/>
            <person name="Nashimoto H."/>
            <person name="Nishio Y."/>
            <person name="Oshima T."/>
            <person name="Saito N."/>
            <person name="Sampei G."/>
            <person name="Seki Y."/>
            <person name="Sivasundaram S."/>
            <person name="Tagami H."/>
            <person name="Takeda J."/>
            <person name="Takemoto K."/>
            <person name="Wada C."/>
            <person name="Yamamoto Y."/>
            <person name="Horiuchi T."/>
        </authorList>
    </citation>
    <scope>NUCLEOTIDE SEQUENCE [LARGE SCALE GENOMIC DNA]</scope>
    <source>
        <strain>K12 / W3110 / ATCC 27325 / DSM 5911</strain>
    </source>
</reference>
<reference key="2">
    <citation type="journal article" date="1997" name="Science">
        <title>The complete genome sequence of Escherichia coli K-12.</title>
        <authorList>
            <person name="Blattner F.R."/>
            <person name="Plunkett G. III"/>
            <person name="Bloch C.A."/>
            <person name="Perna N.T."/>
            <person name="Burland V."/>
            <person name="Riley M."/>
            <person name="Collado-Vides J."/>
            <person name="Glasner J.D."/>
            <person name="Rode C.K."/>
            <person name="Mayhew G.F."/>
            <person name="Gregor J."/>
            <person name="Davis N.W."/>
            <person name="Kirkpatrick H.A."/>
            <person name="Goeden M.A."/>
            <person name="Rose D.J."/>
            <person name="Mau B."/>
            <person name="Shao Y."/>
        </authorList>
    </citation>
    <scope>NUCLEOTIDE SEQUENCE [LARGE SCALE GENOMIC DNA]</scope>
    <source>
        <strain>K12 / MG1655 / ATCC 47076</strain>
    </source>
</reference>
<reference key="3">
    <citation type="journal article" date="2006" name="Mol. Syst. Biol.">
        <title>Highly accurate genome sequences of Escherichia coli K-12 strains MG1655 and W3110.</title>
        <authorList>
            <person name="Hayashi K."/>
            <person name="Morooka N."/>
            <person name="Yamamoto Y."/>
            <person name="Fujita K."/>
            <person name="Isono K."/>
            <person name="Choi S."/>
            <person name="Ohtsubo E."/>
            <person name="Baba T."/>
            <person name="Wanner B.L."/>
            <person name="Mori H."/>
            <person name="Horiuchi T."/>
        </authorList>
    </citation>
    <scope>NUCLEOTIDE SEQUENCE [LARGE SCALE GENOMIC DNA]</scope>
    <source>
        <strain>K12 / W3110 / ATCC 27325 / DSM 5911</strain>
    </source>
</reference>
<reference key="4">
    <citation type="journal article" date="1994" name="Mol. Gen. Genet.">
        <title>The fadD gene of Escherichia coli K12 is located close to rnd at 39.6 min of the chromosomal map and is a new member of the AMP-binding protein family.</title>
        <authorList>
            <person name="Fulda M."/>
            <person name="Heinz E."/>
            <person name="Wolter F.P."/>
        </authorList>
    </citation>
    <scope>NUCLEOTIDE SEQUENCE [GENOMIC DNA] OF 121-193</scope>
    <source>
        <strain>K12</strain>
    </source>
</reference>
<evidence type="ECO:0000255" key="1">
    <source>
        <dbReference type="PROSITE-ProRule" id="PRU00303"/>
    </source>
</evidence>
<evidence type="ECO:0000305" key="2"/>
<organism>
    <name type="scientific">Escherichia coli (strain K12)</name>
    <dbReference type="NCBI Taxonomy" id="83333"/>
    <lineage>
        <taxon>Bacteria</taxon>
        <taxon>Pseudomonadati</taxon>
        <taxon>Pseudomonadota</taxon>
        <taxon>Gammaproteobacteria</taxon>
        <taxon>Enterobacterales</taxon>
        <taxon>Enterobacteriaceae</taxon>
        <taxon>Escherichia</taxon>
    </lineage>
</organism>
<sequence>MAVQKNVIKGILAGTFALMLSGCVTVPDAIKGSSPTPQQDLVRVMSAPQLYVGQEARFGGKVVAVQNQQGKTRLEIATVPLDSGARPTLGEPSRGRIYADVNGFLDPVDFRGQLVTVVGPITGAVDGKIGNTPYKFMVMQVTGYKRWHLTQQVIMPPQPIDPWFYGGRGWPYGYGGWGWYNPGPARVQTVVTE</sequence>
<dbReference type="EMBL" id="U00096">
    <property type="protein sequence ID" value="AAC74876.1"/>
    <property type="molecule type" value="Genomic_DNA"/>
</dbReference>
<dbReference type="EMBL" id="AP009048">
    <property type="protein sequence ID" value="BAA15610.1"/>
    <property type="molecule type" value="Genomic_DNA"/>
</dbReference>
<dbReference type="PIR" id="F64941">
    <property type="entry name" value="F64941"/>
</dbReference>
<dbReference type="RefSeq" id="NP_416320.1">
    <property type="nucleotide sequence ID" value="NC_000913.3"/>
</dbReference>
<dbReference type="RefSeq" id="WP_000290576.1">
    <property type="nucleotide sequence ID" value="NZ_SSZK01000001.1"/>
</dbReference>
<dbReference type="BioGRID" id="4260339">
    <property type="interactions" value="171"/>
</dbReference>
<dbReference type="DIP" id="DIP-28087N"/>
<dbReference type="FunCoup" id="P0AA91">
    <property type="interactions" value="41"/>
</dbReference>
<dbReference type="IntAct" id="P0AA91">
    <property type="interactions" value="4"/>
</dbReference>
<dbReference type="STRING" id="511145.b1806"/>
<dbReference type="jPOST" id="P0AA91"/>
<dbReference type="PaxDb" id="511145-b1806"/>
<dbReference type="EnsemblBacteria" id="AAC74876">
    <property type="protein sequence ID" value="AAC74876"/>
    <property type="gene ID" value="b1806"/>
</dbReference>
<dbReference type="GeneID" id="946312"/>
<dbReference type="KEGG" id="ecj:JW1795"/>
<dbReference type="KEGG" id="eco:b1806"/>
<dbReference type="KEGG" id="ecoc:C3026_10290"/>
<dbReference type="PATRIC" id="fig|1411691.4.peg.447"/>
<dbReference type="EchoBASE" id="EB3284"/>
<dbReference type="eggNOG" id="COG3065">
    <property type="taxonomic scope" value="Bacteria"/>
</dbReference>
<dbReference type="HOGENOM" id="CLU_100924_0_0_6"/>
<dbReference type="InParanoid" id="P0AA91"/>
<dbReference type="OMA" id="MNATGYK"/>
<dbReference type="OrthoDB" id="5295757at2"/>
<dbReference type="PhylomeDB" id="P0AA91"/>
<dbReference type="BioCyc" id="EcoCyc:G6990-MONOMER"/>
<dbReference type="PRO" id="PR:P0AA91"/>
<dbReference type="Proteomes" id="UP000000625">
    <property type="component" value="Chromosome"/>
</dbReference>
<dbReference type="GO" id="GO:0019867">
    <property type="term" value="C:outer membrane"/>
    <property type="evidence" value="ECO:0000318"/>
    <property type="project" value="GO_Central"/>
</dbReference>
<dbReference type="GO" id="GO:0005886">
    <property type="term" value="C:plasma membrane"/>
    <property type="evidence" value="ECO:0007669"/>
    <property type="project" value="UniProtKB-SubCell"/>
</dbReference>
<dbReference type="InterPro" id="IPR004658">
    <property type="entry name" value="OMP_Slp"/>
</dbReference>
<dbReference type="NCBIfam" id="TIGR00752">
    <property type="entry name" value="slp"/>
    <property type="match status" value="1"/>
</dbReference>
<dbReference type="PANTHER" id="PTHR37530">
    <property type="entry name" value="OUTER MEMBRANE PROTEIN SLP"/>
    <property type="match status" value="1"/>
</dbReference>
<dbReference type="PANTHER" id="PTHR37530:SF1">
    <property type="entry name" value="OUTER MEMBRANE PROTEIN SLP"/>
    <property type="match status" value="1"/>
</dbReference>
<dbReference type="Pfam" id="PF03843">
    <property type="entry name" value="Slp"/>
    <property type="match status" value="1"/>
</dbReference>
<dbReference type="PIRSF" id="PIRSF004982">
    <property type="entry name" value="SlP"/>
    <property type="match status" value="1"/>
</dbReference>
<dbReference type="PROSITE" id="PS51257">
    <property type="entry name" value="PROKAR_LIPOPROTEIN"/>
    <property type="match status" value="1"/>
</dbReference>
<name>YEAY_ECOLI</name>
<accession>P0AA91</accession>
<accession>P76255</accession>